<reference key="1">
    <citation type="submission" date="2006-06" db="EMBL/GenBank/DDBJ databases">
        <authorList>
            <consortium name="NIH - Mammalian Gene Collection (MGC) project"/>
        </authorList>
    </citation>
    <scope>NUCLEOTIDE SEQUENCE [LARGE SCALE MRNA]</scope>
    <source>
        <strain>Hereford</strain>
        <tissue>Basal ganglia</tissue>
    </source>
</reference>
<protein>
    <recommendedName>
        <fullName>F-box only protein 2</fullName>
    </recommendedName>
</protein>
<proteinExistence type="evidence at transcript level"/>
<sequence length="297" mass="33601">MDGDGDPESVGQPEEASPEEQQEEACAEEANGGEERPEDDGEGEAAYLDELPEPLLLRVLAELPAAQLVQACRLVCLRWKELVDGAPLWLLKCQQEGLVPQDGPEDERDHWQQFYFLSKRRRNLLRNPCGEEDLEGWCDVEHGGDGWRVEELPGDCGVEFIHDESVKKYFASSFEWCRKAQIIDLQAEGYWEELLDTTQPAIVVKDWYSGRRDAGCLYELTVKLLSEHEDVLAEFNSGQVAVPADSDDGGWTEISHTFTDYGPGVRFIRFEHGGQDCVYWKGWFGARVTNSSVWVEP</sequence>
<name>FBX2_BOVIN</name>
<dbReference type="EMBL" id="BC118302">
    <property type="protein sequence ID" value="AAI18303.1"/>
    <property type="molecule type" value="mRNA"/>
</dbReference>
<dbReference type="RefSeq" id="NP_001069037.1">
    <property type="nucleotide sequence ID" value="NM_001075569.1"/>
</dbReference>
<dbReference type="SMR" id="Q17QK6"/>
<dbReference type="FunCoup" id="Q17QK6">
    <property type="interactions" value="767"/>
</dbReference>
<dbReference type="STRING" id="9913.ENSBTAP00000009501"/>
<dbReference type="PaxDb" id="9913-ENSBTAP00000048374"/>
<dbReference type="Ensembl" id="ENSBTAT00000089954.1">
    <property type="protein sequence ID" value="ENSBTAP00000088492.1"/>
    <property type="gene ID" value="ENSBTAG00000007223.6"/>
</dbReference>
<dbReference type="GeneID" id="512589"/>
<dbReference type="KEGG" id="bta:512589"/>
<dbReference type="CTD" id="26232"/>
<dbReference type="VEuPathDB" id="HostDB:ENSBTAG00000007223"/>
<dbReference type="VGNC" id="VGNC:28897">
    <property type="gene designation" value="FBXO2"/>
</dbReference>
<dbReference type="eggNOG" id="ENOG502QS9C">
    <property type="taxonomic scope" value="Eukaryota"/>
</dbReference>
<dbReference type="GeneTree" id="ENSGT00940000160929"/>
<dbReference type="HOGENOM" id="CLU_068548_0_0_1"/>
<dbReference type="InParanoid" id="Q17QK6"/>
<dbReference type="OMA" id="CLYELCV"/>
<dbReference type="OrthoDB" id="1107553at2759"/>
<dbReference type="Reactome" id="R-BTA-8951664">
    <property type="pathway name" value="Neddylation"/>
</dbReference>
<dbReference type="Reactome" id="R-BTA-983168">
    <property type="pathway name" value="Antigen processing: Ubiquitination &amp; Proteasome degradation"/>
</dbReference>
<dbReference type="UniPathway" id="UPA00143"/>
<dbReference type="Proteomes" id="UP000009136">
    <property type="component" value="Chromosome 16"/>
</dbReference>
<dbReference type="Bgee" id="ENSBTAG00000007223">
    <property type="expression patterns" value="Expressed in retina and 89 other cell types or tissues"/>
</dbReference>
<dbReference type="GO" id="GO:0005737">
    <property type="term" value="C:cytoplasm"/>
    <property type="evidence" value="ECO:0000318"/>
    <property type="project" value="GO_Central"/>
</dbReference>
<dbReference type="GO" id="GO:0005829">
    <property type="term" value="C:cytosol"/>
    <property type="evidence" value="ECO:0000250"/>
    <property type="project" value="UniProtKB"/>
</dbReference>
<dbReference type="GO" id="GO:0005783">
    <property type="term" value="C:endoplasmic reticulum"/>
    <property type="evidence" value="ECO:0007669"/>
    <property type="project" value="UniProtKB-KW"/>
</dbReference>
<dbReference type="GO" id="GO:0016020">
    <property type="term" value="C:membrane"/>
    <property type="evidence" value="ECO:0007669"/>
    <property type="project" value="UniProtKB-KW"/>
</dbReference>
<dbReference type="GO" id="GO:0019005">
    <property type="term" value="C:SCF ubiquitin ligase complex"/>
    <property type="evidence" value="ECO:0000250"/>
    <property type="project" value="UniProtKB"/>
</dbReference>
<dbReference type="GO" id="GO:0030246">
    <property type="term" value="F:carbohydrate binding"/>
    <property type="evidence" value="ECO:0007669"/>
    <property type="project" value="UniProtKB-KW"/>
</dbReference>
<dbReference type="GO" id="GO:0036503">
    <property type="term" value="P:ERAD pathway"/>
    <property type="evidence" value="ECO:0000318"/>
    <property type="project" value="GO_Central"/>
</dbReference>
<dbReference type="GO" id="GO:0006516">
    <property type="term" value="P:glycoprotein catabolic process"/>
    <property type="evidence" value="ECO:0000250"/>
    <property type="project" value="UniProtKB"/>
</dbReference>
<dbReference type="GO" id="GO:0016567">
    <property type="term" value="P:protein ubiquitination"/>
    <property type="evidence" value="ECO:0000250"/>
    <property type="project" value="UniProtKB"/>
</dbReference>
<dbReference type="GO" id="GO:0031146">
    <property type="term" value="P:SCF-dependent proteasomal ubiquitin-dependent protein catabolic process"/>
    <property type="evidence" value="ECO:0000250"/>
    <property type="project" value="UniProtKB"/>
</dbReference>
<dbReference type="FunFam" id="2.60.120.260:FF:000012">
    <property type="entry name" value="F-box only protein 2"/>
    <property type="match status" value="1"/>
</dbReference>
<dbReference type="FunFam" id="1.20.1280.50:FF:000002">
    <property type="entry name" value="F-box only protein 44"/>
    <property type="match status" value="1"/>
</dbReference>
<dbReference type="Gene3D" id="1.20.1280.50">
    <property type="match status" value="1"/>
</dbReference>
<dbReference type="Gene3D" id="2.60.120.260">
    <property type="entry name" value="Galactose-binding domain-like"/>
    <property type="match status" value="1"/>
</dbReference>
<dbReference type="InterPro" id="IPR007397">
    <property type="entry name" value="F-box-assoc_dom"/>
</dbReference>
<dbReference type="InterPro" id="IPR036047">
    <property type="entry name" value="F-box-like_dom_sf"/>
</dbReference>
<dbReference type="InterPro" id="IPR001810">
    <property type="entry name" value="F-box_dom"/>
</dbReference>
<dbReference type="InterPro" id="IPR039752">
    <property type="entry name" value="F-box_only"/>
</dbReference>
<dbReference type="InterPro" id="IPR008979">
    <property type="entry name" value="Galactose-bd-like_sf"/>
</dbReference>
<dbReference type="PANTHER" id="PTHR12125:SF11">
    <property type="entry name" value="F-BOX ONLY PROTEIN 2"/>
    <property type="match status" value="1"/>
</dbReference>
<dbReference type="PANTHER" id="PTHR12125">
    <property type="entry name" value="F-BOX ONLY PROTEIN 6-LIKE PROTEIN"/>
    <property type="match status" value="1"/>
</dbReference>
<dbReference type="Pfam" id="PF12937">
    <property type="entry name" value="F-box-like"/>
    <property type="match status" value="1"/>
</dbReference>
<dbReference type="Pfam" id="PF04300">
    <property type="entry name" value="FBA"/>
    <property type="match status" value="1"/>
</dbReference>
<dbReference type="SMART" id="SM01198">
    <property type="entry name" value="FBA"/>
    <property type="match status" value="1"/>
</dbReference>
<dbReference type="SUPFAM" id="SSF81383">
    <property type="entry name" value="F-box domain"/>
    <property type="match status" value="1"/>
</dbReference>
<dbReference type="SUPFAM" id="SSF49785">
    <property type="entry name" value="Galactose-binding domain-like"/>
    <property type="match status" value="1"/>
</dbReference>
<dbReference type="PROSITE" id="PS51114">
    <property type="entry name" value="FBA"/>
    <property type="match status" value="1"/>
</dbReference>
<dbReference type="PROSITE" id="PS50181">
    <property type="entry name" value="FBOX"/>
    <property type="match status" value="1"/>
</dbReference>
<evidence type="ECO:0000250" key="1"/>
<evidence type="ECO:0000255" key="2">
    <source>
        <dbReference type="PROSITE-ProRule" id="PRU00080"/>
    </source>
</evidence>
<evidence type="ECO:0000255" key="3">
    <source>
        <dbReference type="PROSITE-ProRule" id="PRU00482"/>
    </source>
</evidence>
<evidence type="ECO:0000256" key="4">
    <source>
        <dbReference type="SAM" id="MobiDB-lite"/>
    </source>
</evidence>
<organism>
    <name type="scientific">Bos taurus</name>
    <name type="common">Bovine</name>
    <dbReference type="NCBI Taxonomy" id="9913"/>
    <lineage>
        <taxon>Eukaryota</taxon>
        <taxon>Metazoa</taxon>
        <taxon>Chordata</taxon>
        <taxon>Craniata</taxon>
        <taxon>Vertebrata</taxon>
        <taxon>Euteleostomi</taxon>
        <taxon>Mammalia</taxon>
        <taxon>Eutheria</taxon>
        <taxon>Laurasiatheria</taxon>
        <taxon>Artiodactyla</taxon>
        <taxon>Ruminantia</taxon>
        <taxon>Pecora</taxon>
        <taxon>Bovidae</taxon>
        <taxon>Bovinae</taxon>
        <taxon>Bos</taxon>
    </lineage>
</organism>
<accession>Q17QK6</accession>
<gene>
    <name type="primary">FBXO2</name>
</gene>
<keyword id="KW-0963">Cytoplasm</keyword>
<keyword id="KW-0256">Endoplasmic reticulum</keyword>
<keyword id="KW-0430">Lectin</keyword>
<keyword id="KW-0472">Membrane</keyword>
<keyword id="KW-0492">Microsome</keyword>
<keyword id="KW-1185">Reference proteome</keyword>
<keyword id="KW-0833">Ubl conjugation pathway</keyword>
<comment type="function">
    <text evidence="1">Substrate recognition component of a SCF (SKP1-CUL1-F-box protein) E3 ubiquitin-protein ligase complex that mediates the ubiquitination and subsequent proteasomal degradation of target proteins. Involved in the endoplasmic reticulum-associated degradation pathway (ERAD) for misfolded lumenal proteins by recognizing and binding sugar chains on unfolded glycoproteins that are retrotranslocated into the cytosol and promoting their ubiquitination and subsequent degradation. Prevents formation of cytosolic aggregates of unfolded glycoproteins that have been retrotranslocated into the cytosol. Able to recognize and bind denatured glycoproteins, preferentially those of the high-mannose type (By similarity).</text>
</comment>
<comment type="pathway">
    <text>Protein modification; protein ubiquitination.</text>
</comment>
<comment type="subunit">
    <text evidence="1">Component of the SCF(FBXO2) complex consisting of CUL1, RBX1, SKP1 and FBXO2. Predominantly detected as heterodimer with SKP1; the heterodimer with SKP1 is not part of the SCF(FBXO2) complex (By similarity).</text>
</comment>
<comment type="subcellular location">
    <subcellularLocation>
        <location evidence="1">Cytoplasm</location>
    </subcellularLocation>
    <subcellularLocation>
        <location evidence="1">Microsome membrane</location>
        <topology evidence="1">Peripheral membrane protein</topology>
        <orientation evidence="1">Cytoplasmic side</orientation>
    </subcellularLocation>
</comment>
<feature type="chain" id="PRO_0000284977" description="F-box only protein 2">
    <location>
        <begin position="1"/>
        <end position="297"/>
    </location>
</feature>
<feature type="domain" description="F-box" evidence="2">
    <location>
        <begin position="45"/>
        <end position="92"/>
    </location>
</feature>
<feature type="domain" description="FBA" evidence="3">
    <location>
        <begin position="114"/>
        <end position="297"/>
    </location>
</feature>
<feature type="region of interest" description="Disordered" evidence="4">
    <location>
        <begin position="1"/>
        <end position="42"/>
    </location>
</feature>
<feature type="compositionally biased region" description="Acidic residues" evidence="4">
    <location>
        <begin position="16"/>
        <end position="27"/>
    </location>
</feature>
<feature type="binding site" evidence="1">
    <location>
        <begin position="211"/>
        <end position="213"/>
    </location>
    <ligand>
        <name>a carbohydrate</name>
        <dbReference type="ChEBI" id="CHEBI:16646"/>
    </ligand>
</feature>
<feature type="binding site" evidence="1">
    <location>
        <begin position="279"/>
        <end position="280"/>
    </location>
    <ligand>
        <name>a carbohydrate</name>
        <dbReference type="ChEBI" id="CHEBI:16646"/>
    </ligand>
</feature>
<feature type="site" description="Important for carbohydrate binding" evidence="1">
    <location>
        <position position="174"/>
    </location>
</feature>